<protein>
    <recommendedName>
        <fullName evidence="1">Sec-independent protein translocase protein TatA</fullName>
    </recommendedName>
</protein>
<evidence type="ECO:0000255" key="1">
    <source>
        <dbReference type="HAMAP-Rule" id="MF_00236"/>
    </source>
</evidence>
<evidence type="ECO:0000256" key="2">
    <source>
        <dbReference type="SAM" id="MobiDB-lite"/>
    </source>
</evidence>
<gene>
    <name evidence="1" type="primary">tatA</name>
    <name type="ordered locus">RHECIAT_CH0001909</name>
</gene>
<keyword id="KW-0997">Cell inner membrane</keyword>
<keyword id="KW-1003">Cell membrane</keyword>
<keyword id="KW-0472">Membrane</keyword>
<keyword id="KW-0653">Protein transport</keyword>
<keyword id="KW-0811">Translocation</keyword>
<keyword id="KW-0812">Transmembrane</keyword>
<keyword id="KW-1133">Transmembrane helix</keyword>
<keyword id="KW-0813">Transport</keyword>
<sequence length="63" mass="6990">MGSFSMWHWLIVLVIVLLLFGRGKIPELMGDVAKGIKSFKKGMTDDDAPDTAKTVDHKADETK</sequence>
<feature type="chain" id="PRO_1000197899" description="Sec-independent protein translocase protein TatA">
    <location>
        <begin position="1"/>
        <end position="63"/>
    </location>
</feature>
<feature type="transmembrane region" description="Helical" evidence="1">
    <location>
        <begin position="1"/>
        <end position="21"/>
    </location>
</feature>
<feature type="region of interest" description="Disordered" evidence="2">
    <location>
        <begin position="42"/>
        <end position="63"/>
    </location>
</feature>
<feature type="compositionally biased region" description="Basic and acidic residues" evidence="2">
    <location>
        <begin position="53"/>
        <end position="63"/>
    </location>
</feature>
<organism>
    <name type="scientific">Rhizobium etli (strain CIAT 652)</name>
    <dbReference type="NCBI Taxonomy" id="491916"/>
    <lineage>
        <taxon>Bacteria</taxon>
        <taxon>Pseudomonadati</taxon>
        <taxon>Pseudomonadota</taxon>
        <taxon>Alphaproteobacteria</taxon>
        <taxon>Hyphomicrobiales</taxon>
        <taxon>Rhizobiaceae</taxon>
        <taxon>Rhizobium/Agrobacterium group</taxon>
        <taxon>Rhizobium</taxon>
    </lineage>
</organism>
<dbReference type="EMBL" id="CP001074">
    <property type="protein sequence ID" value="ACE90876.1"/>
    <property type="molecule type" value="Genomic_DNA"/>
</dbReference>
<dbReference type="SMR" id="B3PXU0"/>
<dbReference type="KEGG" id="rec:RHECIAT_CH0001909"/>
<dbReference type="eggNOG" id="COG1826">
    <property type="taxonomic scope" value="Bacteria"/>
</dbReference>
<dbReference type="HOGENOM" id="CLU_086034_5_0_5"/>
<dbReference type="Proteomes" id="UP000008817">
    <property type="component" value="Chromosome"/>
</dbReference>
<dbReference type="GO" id="GO:0033281">
    <property type="term" value="C:TAT protein transport complex"/>
    <property type="evidence" value="ECO:0007669"/>
    <property type="project" value="UniProtKB-UniRule"/>
</dbReference>
<dbReference type="GO" id="GO:0008320">
    <property type="term" value="F:protein transmembrane transporter activity"/>
    <property type="evidence" value="ECO:0007669"/>
    <property type="project" value="UniProtKB-UniRule"/>
</dbReference>
<dbReference type="GO" id="GO:0043953">
    <property type="term" value="P:protein transport by the Tat complex"/>
    <property type="evidence" value="ECO:0007669"/>
    <property type="project" value="UniProtKB-UniRule"/>
</dbReference>
<dbReference type="Gene3D" id="1.20.5.3310">
    <property type="match status" value="1"/>
</dbReference>
<dbReference type="HAMAP" id="MF_00236">
    <property type="entry name" value="TatA_E"/>
    <property type="match status" value="1"/>
</dbReference>
<dbReference type="InterPro" id="IPR003369">
    <property type="entry name" value="TatA/B/E"/>
</dbReference>
<dbReference type="InterPro" id="IPR006312">
    <property type="entry name" value="TatA/E"/>
</dbReference>
<dbReference type="NCBIfam" id="NF001940">
    <property type="entry name" value="PRK00720.1"/>
    <property type="match status" value="1"/>
</dbReference>
<dbReference type="NCBIfam" id="TIGR01411">
    <property type="entry name" value="tatAE"/>
    <property type="match status" value="1"/>
</dbReference>
<dbReference type="PANTHER" id="PTHR42982">
    <property type="entry name" value="SEC-INDEPENDENT PROTEIN TRANSLOCASE PROTEIN TATA"/>
    <property type="match status" value="1"/>
</dbReference>
<dbReference type="PANTHER" id="PTHR42982:SF1">
    <property type="entry name" value="SEC-INDEPENDENT PROTEIN TRANSLOCASE PROTEIN TATA"/>
    <property type="match status" value="1"/>
</dbReference>
<dbReference type="Pfam" id="PF02416">
    <property type="entry name" value="TatA_B_E"/>
    <property type="match status" value="1"/>
</dbReference>
<accession>B3PXU0</accession>
<comment type="function">
    <text evidence="1">Part of the twin-arginine translocation (Tat) system that transports large folded proteins containing a characteristic twin-arginine motif in their signal peptide across membranes. TatA could form the protein-conducting channel of the Tat system.</text>
</comment>
<comment type="subunit">
    <text evidence="1">The Tat system comprises two distinct complexes: a TatABC complex, containing multiple copies of TatA, TatB and TatC subunits, and a separate TatA complex, containing only TatA subunits. Substrates initially bind to the TatABC complex, which probably triggers association of the separate TatA complex to form the active translocon.</text>
</comment>
<comment type="subcellular location">
    <subcellularLocation>
        <location evidence="1">Cell inner membrane</location>
        <topology evidence="1">Single-pass membrane protein</topology>
    </subcellularLocation>
</comment>
<comment type="similarity">
    <text evidence="1">Belongs to the TatA/E family.</text>
</comment>
<proteinExistence type="inferred from homology"/>
<reference key="1">
    <citation type="journal article" date="2010" name="Appl. Environ. Microbiol.">
        <title>Conserved symbiotic plasmid DNA sequences in the multireplicon pangenomic structure of Rhizobium etli.</title>
        <authorList>
            <person name="Gonzalez V."/>
            <person name="Acosta J.L."/>
            <person name="Santamaria R.I."/>
            <person name="Bustos P."/>
            <person name="Fernandez J.L."/>
            <person name="Hernandez Gonzalez I.L."/>
            <person name="Diaz R."/>
            <person name="Flores M."/>
            <person name="Palacios R."/>
            <person name="Mora J."/>
            <person name="Davila G."/>
        </authorList>
    </citation>
    <scope>NUCLEOTIDE SEQUENCE [LARGE SCALE GENOMIC DNA]</scope>
    <source>
        <strain>CIAT 652</strain>
    </source>
</reference>
<name>TATA_RHIE6</name>